<protein>
    <recommendedName>
        <fullName evidence="1">Enolase</fullName>
        <ecNumber evidence="1">4.2.1.11</ecNumber>
    </recommendedName>
    <alternativeName>
        <fullName evidence="1">2-phospho-D-glycerate hydro-lyase</fullName>
    </alternativeName>
    <alternativeName>
        <fullName evidence="1">2-phosphoglycerate dehydratase</fullName>
    </alternativeName>
</protein>
<comment type="function">
    <text evidence="1">Catalyzes the reversible conversion of 2-phosphoglycerate (2-PG) into phosphoenolpyruvate (PEP). It is essential for the degradation of carbohydrates via glycolysis.</text>
</comment>
<comment type="catalytic activity">
    <reaction evidence="1">
        <text>(2R)-2-phosphoglycerate = phosphoenolpyruvate + H2O</text>
        <dbReference type="Rhea" id="RHEA:10164"/>
        <dbReference type="ChEBI" id="CHEBI:15377"/>
        <dbReference type="ChEBI" id="CHEBI:58289"/>
        <dbReference type="ChEBI" id="CHEBI:58702"/>
        <dbReference type="EC" id="4.2.1.11"/>
    </reaction>
</comment>
<comment type="cofactor">
    <cofactor evidence="1">
        <name>Mg(2+)</name>
        <dbReference type="ChEBI" id="CHEBI:18420"/>
    </cofactor>
    <text evidence="1">Binds a second Mg(2+) ion via substrate during catalysis.</text>
</comment>
<comment type="pathway">
    <text evidence="1">Carbohydrate degradation; glycolysis; pyruvate from D-glyceraldehyde 3-phosphate: step 4/5.</text>
</comment>
<comment type="subunit">
    <text evidence="1">Component of the RNA degradosome, a multiprotein complex involved in RNA processing and mRNA degradation.</text>
</comment>
<comment type="subcellular location">
    <subcellularLocation>
        <location evidence="1">Cytoplasm</location>
    </subcellularLocation>
    <subcellularLocation>
        <location evidence="1">Secreted</location>
    </subcellularLocation>
    <subcellularLocation>
        <location evidence="1">Cell surface</location>
    </subcellularLocation>
    <text evidence="1">Fractions of enolase are present in both the cytoplasm and on the cell surface.</text>
</comment>
<comment type="similarity">
    <text evidence="1">Belongs to the enolase family.</text>
</comment>
<name>ENO_ACIAD</name>
<reference key="1">
    <citation type="journal article" date="2004" name="Nucleic Acids Res.">
        <title>Unique features revealed by the genome sequence of Acinetobacter sp. ADP1, a versatile and naturally transformation competent bacterium.</title>
        <authorList>
            <person name="Barbe V."/>
            <person name="Vallenet D."/>
            <person name="Fonknechten N."/>
            <person name="Kreimeyer A."/>
            <person name="Oztas S."/>
            <person name="Labarre L."/>
            <person name="Cruveiller S."/>
            <person name="Robert C."/>
            <person name="Duprat S."/>
            <person name="Wincker P."/>
            <person name="Ornston L.N."/>
            <person name="Weissenbach J."/>
            <person name="Marliere P."/>
            <person name="Cohen G.N."/>
            <person name="Medigue C."/>
        </authorList>
    </citation>
    <scope>NUCLEOTIDE SEQUENCE [LARGE SCALE GENOMIC DNA]</scope>
    <source>
        <strain>ATCC 33305 / BD413 / ADP1</strain>
    </source>
</reference>
<proteinExistence type="inferred from homology"/>
<sequence length="431" mass="46412">MFMSQIVDIRAREILDSRGNPTIEADVILASGVVGRACAPSGASTGSREALELRDGDKARYLGKGVKTAVNNVNTIIRDALVGKSVFEQKDIDNTMIELDGTENKEKLGANATLAVSLAAARAAADEKKIPLFQYIADLRGQTILTMPVPMMNIINGGSHADNNVDIQEFMIEPVGFTSFSEALRAGAEIFHSLKSVLNKKGLNTAVGDEGGFAPNLRSNEEAITVILEAIGQTGYKAGSDIMLALDCASSEFYKNGQYILAGEGNKAFTSNQFSDYLAGLVNQYPIISIEDGLDESDWEGWSYLTSILGDKIQLVGDDLFVTNPKILQRGINEKVGNSILIKYNQIGTLTETLDAIYLAKDNGYSTVISHRSGETEDSTIADLAVGTAAGQIKTGSLCRSDRVAKYNQLLRIEELTKAAYRGKAEFKGLN</sequence>
<keyword id="KW-0963">Cytoplasm</keyword>
<keyword id="KW-0324">Glycolysis</keyword>
<keyword id="KW-0456">Lyase</keyword>
<keyword id="KW-0460">Magnesium</keyword>
<keyword id="KW-0479">Metal-binding</keyword>
<keyword id="KW-0964">Secreted</keyword>
<evidence type="ECO:0000255" key="1">
    <source>
        <dbReference type="HAMAP-Rule" id="MF_00318"/>
    </source>
</evidence>
<dbReference type="EC" id="4.2.1.11" evidence="1"/>
<dbReference type="EMBL" id="CR543861">
    <property type="protein sequence ID" value="CAG68824.1"/>
    <property type="molecule type" value="Genomic_DNA"/>
</dbReference>
<dbReference type="SMR" id="Q6FAT9"/>
<dbReference type="STRING" id="202950.GCA_001485005_00370"/>
<dbReference type="KEGG" id="aci:ACIAD2001"/>
<dbReference type="eggNOG" id="COG0148">
    <property type="taxonomic scope" value="Bacteria"/>
</dbReference>
<dbReference type="HOGENOM" id="CLU_031223_2_1_6"/>
<dbReference type="UniPathway" id="UPA00109">
    <property type="reaction ID" value="UER00187"/>
</dbReference>
<dbReference type="Proteomes" id="UP000000430">
    <property type="component" value="Chromosome"/>
</dbReference>
<dbReference type="GO" id="GO:0009986">
    <property type="term" value="C:cell surface"/>
    <property type="evidence" value="ECO:0007669"/>
    <property type="project" value="UniProtKB-SubCell"/>
</dbReference>
<dbReference type="GO" id="GO:0005576">
    <property type="term" value="C:extracellular region"/>
    <property type="evidence" value="ECO:0007669"/>
    <property type="project" value="UniProtKB-SubCell"/>
</dbReference>
<dbReference type="GO" id="GO:0000015">
    <property type="term" value="C:phosphopyruvate hydratase complex"/>
    <property type="evidence" value="ECO:0007669"/>
    <property type="project" value="InterPro"/>
</dbReference>
<dbReference type="GO" id="GO:0000287">
    <property type="term" value="F:magnesium ion binding"/>
    <property type="evidence" value="ECO:0007669"/>
    <property type="project" value="UniProtKB-UniRule"/>
</dbReference>
<dbReference type="GO" id="GO:0004634">
    <property type="term" value="F:phosphopyruvate hydratase activity"/>
    <property type="evidence" value="ECO:0007669"/>
    <property type="project" value="UniProtKB-UniRule"/>
</dbReference>
<dbReference type="GO" id="GO:0006096">
    <property type="term" value="P:glycolytic process"/>
    <property type="evidence" value="ECO:0007669"/>
    <property type="project" value="UniProtKB-UniRule"/>
</dbReference>
<dbReference type="CDD" id="cd03313">
    <property type="entry name" value="enolase"/>
    <property type="match status" value="1"/>
</dbReference>
<dbReference type="FunFam" id="3.20.20.120:FF:000001">
    <property type="entry name" value="Enolase"/>
    <property type="match status" value="1"/>
</dbReference>
<dbReference type="FunFam" id="3.30.390.10:FF:000001">
    <property type="entry name" value="Enolase"/>
    <property type="match status" value="1"/>
</dbReference>
<dbReference type="Gene3D" id="3.20.20.120">
    <property type="entry name" value="Enolase-like C-terminal domain"/>
    <property type="match status" value="1"/>
</dbReference>
<dbReference type="Gene3D" id="3.30.390.10">
    <property type="entry name" value="Enolase-like, N-terminal domain"/>
    <property type="match status" value="1"/>
</dbReference>
<dbReference type="HAMAP" id="MF_00318">
    <property type="entry name" value="Enolase"/>
    <property type="match status" value="1"/>
</dbReference>
<dbReference type="InterPro" id="IPR000941">
    <property type="entry name" value="Enolase"/>
</dbReference>
<dbReference type="InterPro" id="IPR036849">
    <property type="entry name" value="Enolase-like_C_sf"/>
</dbReference>
<dbReference type="InterPro" id="IPR029017">
    <property type="entry name" value="Enolase-like_N"/>
</dbReference>
<dbReference type="InterPro" id="IPR020810">
    <property type="entry name" value="Enolase_C"/>
</dbReference>
<dbReference type="InterPro" id="IPR020809">
    <property type="entry name" value="Enolase_CS"/>
</dbReference>
<dbReference type="InterPro" id="IPR020811">
    <property type="entry name" value="Enolase_N"/>
</dbReference>
<dbReference type="NCBIfam" id="TIGR01060">
    <property type="entry name" value="eno"/>
    <property type="match status" value="1"/>
</dbReference>
<dbReference type="PANTHER" id="PTHR11902">
    <property type="entry name" value="ENOLASE"/>
    <property type="match status" value="1"/>
</dbReference>
<dbReference type="PANTHER" id="PTHR11902:SF1">
    <property type="entry name" value="ENOLASE"/>
    <property type="match status" value="1"/>
</dbReference>
<dbReference type="Pfam" id="PF00113">
    <property type="entry name" value="Enolase_C"/>
    <property type="match status" value="1"/>
</dbReference>
<dbReference type="Pfam" id="PF03952">
    <property type="entry name" value="Enolase_N"/>
    <property type="match status" value="1"/>
</dbReference>
<dbReference type="PIRSF" id="PIRSF001400">
    <property type="entry name" value="Enolase"/>
    <property type="match status" value="1"/>
</dbReference>
<dbReference type="PRINTS" id="PR00148">
    <property type="entry name" value="ENOLASE"/>
</dbReference>
<dbReference type="SFLD" id="SFLDS00001">
    <property type="entry name" value="Enolase"/>
    <property type="match status" value="1"/>
</dbReference>
<dbReference type="SFLD" id="SFLDF00002">
    <property type="entry name" value="enolase"/>
    <property type="match status" value="1"/>
</dbReference>
<dbReference type="SMART" id="SM01192">
    <property type="entry name" value="Enolase_C"/>
    <property type="match status" value="1"/>
</dbReference>
<dbReference type="SMART" id="SM01193">
    <property type="entry name" value="Enolase_N"/>
    <property type="match status" value="1"/>
</dbReference>
<dbReference type="SUPFAM" id="SSF51604">
    <property type="entry name" value="Enolase C-terminal domain-like"/>
    <property type="match status" value="1"/>
</dbReference>
<dbReference type="SUPFAM" id="SSF54826">
    <property type="entry name" value="Enolase N-terminal domain-like"/>
    <property type="match status" value="1"/>
</dbReference>
<dbReference type="PROSITE" id="PS00164">
    <property type="entry name" value="ENOLASE"/>
    <property type="match status" value="1"/>
</dbReference>
<feature type="chain" id="PRO_0000133827" description="Enolase">
    <location>
        <begin position="1"/>
        <end position="431"/>
    </location>
</feature>
<feature type="active site" description="Proton donor" evidence="1">
    <location>
        <position position="210"/>
    </location>
</feature>
<feature type="active site" description="Proton acceptor" evidence="1">
    <location>
        <position position="343"/>
    </location>
</feature>
<feature type="binding site" evidence="1">
    <location>
        <position position="168"/>
    </location>
    <ligand>
        <name>(2R)-2-phosphoglycerate</name>
        <dbReference type="ChEBI" id="CHEBI:58289"/>
    </ligand>
</feature>
<feature type="binding site" evidence="1">
    <location>
        <position position="247"/>
    </location>
    <ligand>
        <name>Mg(2+)</name>
        <dbReference type="ChEBI" id="CHEBI:18420"/>
    </ligand>
</feature>
<feature type="binding site" evidence="1">
    <location>
        <position position="291"/>
    </location>
    <ligand>
        <name>Mg(2+)</name>
        <dbReference type="ChEBI" id="CHEBI:18420"/>
    </ligand>
</feature>
<feature type="binding site" evidence="1">
    <location>
        <position position="318"/>
    </location>
    <ligand>
        <name>Mg(2+)</name>
        <dbReference type="ChEBI" id="CHEBI:18420"/>
    </ligand>
</feature>
<feature type="binding site" evidence="1">
    <location>
        <position position="343"/>
    </location>
    <ligand>
        <name>(2R)-2-phosphoglycerate</name>
        <dbReference type="ChEBI" id="CHEBI:58289"/>
    </ligand>
</feature>
<feature type="binding site" evidence="1">
    <location>
        <position position="372"/>
    </location>
    <ligand>
        <name>(2R)-2-phosphoglycerate</name>
        <dbReference type="ChEBI" id="CHEBI:58289"/>
    </ligand>
</feature>
<feature type="binding site" evidence="1">
    <location>
        <position position="373"/>
    </location>
    <ligand>
        <name>(2R)-2-phosphoglycerate</name>
        <dbReference type="ChEBI" id="CHEBI:58289"/>
    </ligand>
</feature>
<feature type="binding site" evidence="1">
    <location>
        <position position="394"/>
    </location>
    <ligand>
        <name>(2R)-2-phosphoglycerate</name>
        <dbReference type="ChEBI" id="CHEBI:58289"/>
    </ligand>
</feature>
<gene>
    <name evidence="1" type="primary">eno</name>
    <name type="ordered locus">ACIAD2001</name>
</gene>
<accession>Q6FAT9</accession>
<organism>
    <name type="scientific">Acinetobacter baylyi (strain ATCC 33305 / BD413 / ADP1)</name>
    <dbReference type="NCBI Taxonomy" id="62977"/>
    <lineage>
        <taxon>Bacteria</taxon>
        <taxon>Pseudomonadati</taxon>
        <taxon>Pseudomonadota</taxon>
        <taxon>Gammaproteobacteria</taxon>
        <taxon>Moraxellales</taxon>
        <taxon>Moraxellaceae</taxon>
        <taxon>Acinetobacter</taxon>
    </lineage>
</organism>